<evidence type="ECO:0000255" key="1">
    <source>
        <dbReference type="HAMAP-Rule" id="MF_01006"/>
    </source>
</evidence>
<keyword id="KW-0046">Antibiotic resistance</keyword>
<keyword id="KW-1003">Cell membrane</keyword>
<keyword id="KW-0133">Cell shape</keyword>
<keyword id="KW-0961">Cell wall biogenesis/degradation</keyword>
<keyword id="KW-0378">Hydrolase</keyword>
<keyword id="KW-0472">Membrane</keyword>
<keyword id="KW-0573">Peptidoglycan synthesis</keyword>
<keyword id="KW-0812">Transmembrane</keyword>
<keyword id="KW-1133">Transmembrane helix</keyword>
<protein>
    <recommendedName>
        <fullName evidence="1">Undecaprenyl-diphosphatase 3</fullName>
        <ecNumber evidence="1">3.6.1.27</ecNumber>
    </recommendedName>
    <alternativeName>
        <fullName evidence="1">Bacitracin resistance protein 3</fullName>
    </alternativeName>
    <alternativeName>
        <fullName evidence="1">Undecaprenyl pyrophosphate phosphatase 3</fullName>
    </alternativeName>
</protein>
<proteinExistence type="inferred from homology"/>
<organism>
    <name type="scientific">Bacillus cereus (strain ATCC 10987 / NRS 248)</name>
    <dbReference type="NCBI Taxonomy" id="222523"/>
    <lineage>
        <taxon>Bacteria</taxon>
        <taxon>Bacillati</taxon>
        <taxon>Bacillota</taxon>
        <taxon>Bacilli</taxon>
        <taxon>Bacillales</taxon>
        <taxon>Bacillaceae</taxon>
        <taxon>Bacillus</taxon>
        <taxon>Bacillus cereus group</taxon>
    </lineage>
</organism>
<sequence length="259" mass="29212">MNWLEAFILGIIQGLTEFLPISSTGHLYLGRHLFQLDEAGLFLDTMLHIGTLLAVFIYYKKEFIYLIKNPFSKLMLLLIVGTIPAVVIGLLFKDFFEDISKTGITIGWEFLVTGFFLYMADKXKNGRKKMDDITYKDAFIIGSFXAVAIFPAISRSGMTIVAALWRKLDRETAAYFSFLLSTPAIVGAIILQFVDVFQGKAESISSTSLIVGTLSAAFFGYIAVSWMIQYLKRHSLKVFAYYVWGLGILILTLQFTRVF</sequence>
<gene>
    <name evidence="1" type="primary">uppP3</name>
    <name type="synonym">bacA3</name>
    <name type="synonym">upk3</name>
    <name type="ordered locus">BCE_2732</name>
</gene>
<name>UPPP3_BACC1</name>
<accession>P62463</accession>
<dbReference type="EC" id="3.6.1.27" evidence="1"/>
<dbReference type="EMBL" id="AE017194">
    <property type="protein sequence ID" value="AAS41644.1"/>
    <property type="molecule type" value="Genomic_DNA"/>
</dbReference>
<dbReference type="KEGG" id="bca:BCE_2732"/>
<dbReference type="HOGENOM" id="CLU_060296_1_2_9"/>
<dbReference type="Proteomes" id="UP000002527">
    <property type="component" value="Chromosome"/>
</dbReference>
<dbReference type="GO" id="GO:0005886">
    <property type="term" value="C:plasma membrane"/>
    <property type="evidence" value="ECO:0007669"/>
    <property type="project" value="UniProtKB-SubCell"/>
</dbReference>
<dbReference type="GO" id="GO:0050380">
    <property type="term" value="F:undecaprenyl-diphosphatase activity"/>
    <property type="evidence" value="ECO:0007669"/>
    <property type="project" value="UniProtKB-UniRule"/>
</dbReference>
<dbReference type="GO" id="GO:0071555">
    <property type="term" value="P:cell wall organization"/>
    <property type="evidence" value="ECO:0007669"/>
    <property type="project" value="UniProtKB-KW"/>
</dbReference>
<dbReference type="GO" id="GO:0009252">
    <property type="term" value="P:peptidoglycan biosynthetic process"/>
    <property type="evidence" value="ECO:0007669"/>
    <property type="project" value="UniProtKB-KW"/>
</dbReference>
<dbReference type="GO" id="GO:0008360">
    <property type="term" value="P:regulation of cell shape"/>
    <property type="evidence" value="ECO:0007669"/>
    <property type="project" value="UniProtKB-KW"/>
</dbReference>
<dbReference type="GO" id="GO:0046677">
    <property type="term" value="P:response to antibiotic"/>
    <property type="evidence" value="ECO:0007669"/>
    <property type="project" value="UniProtKB-UniRule"/>
</dbReference>
<dbReference type="HAMAP" id="MF_01006">
    <property type="entry name" value="Undec_diphosphatase"/>
    <property type="match status" value="1"/>
</dbReference>
<dbReference type="InterPro" id="IPR003824">
    <property type="entry name" value="UppP"/>
</dbReference>
<dbReference type="PANTHER" id="PTHR30622">
    <property type="entry name" value="UNDECAPRENYL-DIPHOSPHATASE"/>
    <property type="match status" value="1"/>
</dbReference>
<dbReference type="PANTHER" id="PTHR30622:SF4">
    <property type="entry name" value="UNDECAPRENYL-DIPHOSPHATASE"/>
    <property type="match status" value="1"/>
</dbReference>
<dbReference type="Pfam" id="PF02673">
    <property type="entry name" value="BacA"/>
    <property type="match status" value="1"/>
</dbReference>
<reference key="1">
    <citation type="journal article" date="2004" name="Nucleic Acids Res.">
        <title>The genome sequence of Bacillus cereus ATCC 10987 reveals metabolic adaptations and a large plasmid related to Bacillus anthracis pXO1.</title>
        <authorList>
            <person name="Rasko D.A."/>
            <person name="Ravel J."/>
            <person name="Oekstad O.A."/>
            <person name="Helgason E."/>
            <person name="Cer R.Z."/>
            <person name="Jiang L."/>
            <person name="Shores K.A."/>
            <person name="Fouts D.E."/>
            <person name="Tourasse N.J."/>
            <person name="Angiuoli S.V."/>
            <person name="Kolonay J.F."/>
            <person name="Nelson W.C."/>
            <person name="Kolstoe A.-B."/>
            <person name="Fraser C.M."/>
            <person name="Read T.D."/>
        </authorList>
    </citation>
    <scope>NUCLEOTIDE SEQUENCE [LARGE SCALE GENOMIC DNA]</scope>
    <source>
        <strain>ATCC 10987 / NRS 248</strain>
    </source>
</reference>
<comment type="function">
    <text evidence="1">Catalyzes the dephosphorylation of undecaprenyl diphosphate (UPP). Confers resistance to bacitracin.</text>
</comment>
<comment type="catalytic activity">
    <reaction evidence="1">
        <text>di-trans,octa-cis-undecaprenyl diphosphate + H2O = di-trans,octa-cis-undecaprenyl phosphate + phosphate + H(+)</text>
        <dbReference type="Rhea" id="RHEA:28094"/>
        <dbReference type="ChEBI" id="CHEBI:15377"/>
        <dbReference type="ChEBI" id="CHEBI:15378"/>
        <dbReference type="ChEBI" id="CHEBI:43474"/>
        <dbReference type="ChEBI" id="CHEBI:58405"/>
        <dbReference type="ChEBI" id="CHEBI:60392"/>
        <dbReference type="EC" id="3.6.1.27"/>
    </reaction>
</comment>
<comment type="subcellular location">
    <subcellularLocation>
        <location evidence="1">Cell membrane</location>
        <topology evidence="1">Multi-pass membrane protein</topology>
    </subcellularLocation>
</comment>
<comment type="miscellaneous">
    <text>Bacitracin is thought to be involved in the inhibition of peptidoglycan synthesis by sequestering undecaprenyl diphosphate, thereby reducing the pool of lipid carrier available.</text>
</comment>
<comment type="similarity">
    <text evidence="1">Belongs to the UppP family.</text>
</comment>
<feature type="chain" id="PRO_0000151090" description="Undecaprenyl-diphosphatase 3">
    <location>
        <begin position="1"/>
        <end position="259"/>
    </location>
</feature>
<feature type="transmembrane region" description="Helical" evidence="1">
    <location>
        <begin position="1"/>
        <end position="21"/>
    </location>
</feature>
<feature type="transmembrane region" description="Helical" evidence="1">
    <location>
        <begin position="39"/>
        <end position="59"/>
    </location>
</feature>
<feature type="transmembrane region" description="Helical" evidence="1">
    <location>
        <begin position="71"/>
        <end position="91"/>
    </location>
</feature>
<feature type="transmembrane region" description="Helical" evidence="1">
    <location>
        <begin position="99"/>
        <end position="119"/>
    </location>
</feature>
<feature type="transmembrane region" description="Helical" evidence="1">
    <location>
        <begin position="133"/>
        <end position="153"/>
    </location>
</feature>
<feature type="transmembrane region" description="Helical" evidence="1">
    <location>
        <begin position="174"/>
        <end position="194"/>
    </location>
</feature>
<feature type="transmembrane region" description="Helical" evidence="1">
    <location>
        <begin position="208"/>
        <end position="228"/>
    </location>
</feature>
<feature type="transmembrane region" description="Helical" evidence="1">
    <location>
        <begin position="236"/>
        <end position="256"/>
    </location>
</feature>